<protein>
    <recommendedName>
        <fullName evidence="1">Acyl carrier protein</fullName>
        <shortName evidence="1">ACP</shortName>
    </recommendedName>
</protein>
<name>ACP_BARQU</name>
<gene>
    <name evidence="1" type="primary">acpP</name>
    <name type="ordered locus">BQ04540</name>
</gene>
<feature type="chain" id="PRO_0000180107" description="Acyl carrier protein">
    <location>
        <begin position="1"/>
        <end position="78"/>
    </location>
</feature>
<feature type="domain" description="Carrier" evidence="2">
    <location>
        <begin position="2"/>
        <end position="77"/>
    </location>
</feature>
<feature type="modified residue" description="O-(pantetheine 4'-phosphoryl)serine" evidence="2">
    <location>
        <position position="37"/>
    </location>
</feature>
<reference key="1">
    <citation type="journal article" date="2004" name="Proc. Natl. Acad. Sci. U.S.A.">
        <title>The louse-borne human pathogen Bartonella quintana is a genomic derivative of the zoonotic agent Bartonella henselae.</title>
        <authorList>
            <person name="Alsmark U.C.M."/>
            <person name="Frank A.C."/>
            <person name="Karlberg E.O."/>
            <person name="Legault B.-A."/>
            <person name="Ardell D.H."/>
            <person name="Canbaeck B."/>
            <person name="Eriksson A.-S."/>
            <person name="Naeslund A.K."/>
            <person name="Handley S.A."/>
            <person name="Huvet M."/>
            <person name="La Scola B."/>
            <person name="Holmberg M."/>
            <person name="Andersson S.G.E."/>
        </authorList>
    </citation>
    <scope>NUCLEOTIDE SEQUENCE [LARGE SCALE GENOMIC DNA]</scope>
    <source>
        <strain>Toulouse</strain>
    </source>
</reference>
<accession>Q6G056</accession>
<organism>
    <name type="scientific">Bartonella quintana (strain Toulouse)</name>
    <name type="common">Rochalimaea quintana</name>
    <dbReference type="NCBI Taxonomy" id="283165"/>
    <lineage>
        <taxon>Bacteria</taxon>
        <taxon>Pseudomonadati</taxon>
        <taxon>Pseudomonadota</taxon>
        <taxon>Alphaproteobacteria</taxon>
        <taxon>Hyphomicrobiales</taxon>
        <taxon>Bartonellaceae</taxon>
        <taxon>Bartonella</taxon>
    </lineage>
</organism>
<dbReference type="EMBL" id="BX897700">
    <property type="protein sequence ID" value="CAF25953.1"/>
    <property type="molecule type" value="Genomic_DNA"/>
</dbReference>
<dbReference type="RefSeq" id="WP_004860281.1">
    <property type="nucleotide sequence ID" value="NC_005955.1"/>
</dbReference>
<dbReference type="SMR" id="Q6G056"/>
<dbReference type="KEGG" id="bqu:BQ04540"/>
<dbReference type="eggNOG" id="COG0236">
    <property type="taxonomic scope" value="Bacteria"/>
</dbReference>
<dbReference type="HOGENOM" id="CLU_108696_5_1_5"/>
<dbReference type="OrthoDB" id="9804551at2"/>
<dbReference type="UniPathway" id="UPA00094"/>
<dbReference type="Proteomes" id="UP000000597">
    <property type="component" value="Chromosome"/>
</dbReference>
<dbReference type="GO" id="GO:0005829">
    <property type="term" value="C:cytosol"/>
    <property type="evidence" value="ECO:0007669"/>
    <property type="project" value="TreeGrafter"/>
</dbReference>
<dbReference type="GO" id="GO:0016020">
    <property type="term" value="C:membrane"/>
    <property type="evidence" value="ECO:0007669"/>
    <property type="project" value="GOC"/>
</dbReference>
<dbReference type="GO" id="GO:0000035">
    <property type="term" value="F:acyl binding"/>
    <property type="evidence" value="ECO:0007669"/>
    <property type="project" value="TreeGrafter"/>
</dbReference>
<dbReference type="GO" id="GO:0000036">
    <property type="term" value="F:acyl carrier activity"/>
    <property type="evidence" value="ECO:0007669"/>
    <property type="project" value="UniProtKB-UniRule"/>
</dbReference>
<dbReference type="GO" id="GO:0031177">
    <property type="term" value="F:phosphopantetheine binding"/>
    <property type="evidence" value="ECO:0007669"/>
    <property type="project" value="InterPro"/>
</dbReference>
<dbReference type="GO" id="GO:0009245">
    <property type="term" value="P:lipid A biosynthetic process"/>
    <property type="evidence" value="ECO:0007669"/>
    <property type="project" value="TreeGrafter"/>
</dbReference>
<dbReference type="FunFam" id="1.10.1200.10:FF:000001">
    <property type="entry name" value="Acyl carrier protein"/>
    <property type="match status" value="1"/>
</dbReference>
<dbReference type="Gene3D" id="1.10.1200.10">
    <property type="entry name" value="ACP-like"/>
    <property type="match status" value="1"/>
</dbReference>
<dbReference type="HAMAP" id="MF_01217">
    <property type="entry name" value="Acyl_carrier"/>
    <property type="match status" value="1"/>
</dbReference>
<dbReference type="InterPro" id="IPR003231">
    <property type="entry name" value="ACP"/>
</dbReference>
<dbReference type="InterPro" id="IPR036736">
    <property type="entry name" value="ACP-like_sf"/>
</dbReference>
<dbReference type="InterPro" id="IPR020806">
    <property type="entry name" value="PKS_PP-bd"/>
</dbReference>
<dbReference type="InterPro" id="IPR009081">
    <property type="entry name" value="PP-bd_ACP"/>
</dbReference>
<dbReference type="InterPro" id="IPR006162">
    <property type="entry name" value="Ppantetheine_attach_site"/>
</dbReference>
<dbReference type="NCBIfam" id="TIGR00517">
    <property type="entry name" value="acyl_carrier"/>
    <property type="match status" value="1"/>
</dbReference>
<dbReference type="NCBIfam" id="NF002148">
    <property type="entry name" value="PRK00982.1-2"/>
    <property type="match status" value="1"/>
</dbReference>
<dbReference type="NCBIfam" id="NF002149">
    <property type="entry name" value="PRK00982.1-3"/>
    <property type="match status" value="1"/>
</dbReference>
<dbReference type="NCBIfam" id="NF002150">
    <property type="entry name" value="PRK00982.1-4"/>
    <property type="match status" value="1"/>
</dbReference>
<dbReference type="NCBIfam" id="NF002151">
    <property type="entry name" value="PRK00982.1-5"/>
    <property type="match status" value="1"/>
</dbReference>
<dbReference type="PANTHER" id="PTHR20863">
    <property type="entry name" value="ACYL CARRIER PROTEIN"/>
    <property type="match status" value="1"/>
</dbReference>
<dbReference type="PANTHER" id="PTHR20863:SF76">
    <property type="entry name" value="CARRIER DOMAIN-CONTAINING PROTEIN"/>
    <property type="match status" value="1"/>
</dbReference>
<dbReference type="Pfam" id="PF00550">
    <property type="entry name" value="PP-binding"/>
    <property type="match status" value="1"/>
</dbReference>
<dbReference type="SMART" id="SM00823">
    <property type="entry name" value="PKS_PP"/>
    <property type="match status" value="1"/>
</dbReference>
<dbReference type="SUPFAM" id="SSF47336">
    <property type="entry name" value="ACP-like"/>
    <property type="match status" value="1"/>
</dbReference>
<dbReference type="PROSITE" id="PS50075">
    <property type="entry name" value="CARRIER"/>
    <property type="match status" value="1"/>
</dbReference>
<dbReference type="PROSITE" id="PS00012">
    <property type="entry name" value="PHOSPHOPANTETHEINE"/>
    <property type="match status" value="1"/>
</dbReference>
<comment type="function">
    <text evidence="1">Carrier of the growing fatty acid chain in fatty acid biosynthesis.</text>
</comment>
<comment type="pathway">
    <text evidence="1">Lipid metabolism; fatty acid biosynthesis.</text>
</comment>
<comment type="subcellular location">
    <subcellularLocation>
        <location evidence="1">Cytoplasm</location>
    </subcellularLocation>
</comment>
<comment type="PTM">
    <text evidence="1">4'-phosphopantetheine is transferred from CoA to a specific serine of apo-ACP by AcpS. This modification is essential for activity because fatty acids are bound in thioester linkage to the sulfhydryl of the prosthetic group.</text>
</comment>
<comment type="similarity">
    <text evidence="1">Belongs to the acyl carrier protein (ACP) family.</text>
</comment>
<proteinExistence type="inferred from homology"/>
<evidence type="ECO:0000255" key="1">
    <source>
        <dbReference type="HAMAP-Rule" id="MF_01217"/>
    </source>
</evidence>
<evidence type="ECO:0000255" key="2">
    <source>
        <dbReference type="PROSITE-ProRule" id="PRU00258"/>
    </source>
</evidence>
<keyword id="KW-0963">Cytoplasm</keyword>
<keyword id="KW-0275">Fatty acid biosynthesis</keyword>
<keyword id="KW-0276">Fatty acid metabolism</keyword>
<keyword id="KW-0444">Lipid biosynthesis</keyword>
<keyword id="KW-0443">Lipid metabolism</keyword>
<keyword id="KW-0596">Phosphopantetheine</keyword>
<keyword id="KW-0597">Phosphoprotein</keyword>
<sequence length="78" mass="8445">MSDTVERVKKIIVEHLGVNADKVVENASFIDDLGADSLDTVELVMAFEEEFGVEIPDEAAETIFTVGDAVKFIDKASA</sequence>